<name>TRUA_ECOLI</name>
<reference key="1">
    <citation type="journal article" date="1985" name="Nucleic Acids Res.">
        <title>Structural features of the hisT operon of Escherichia coli K-12.</title>
        <authorList>
            <person name="Arps P.J."/>
            <person name="Marvel C.C."/>
            <person name="Rubin B.C."/>
            <person name="Tolan D.A."/>
            <person name="Penhoet E.E."/>
            <person name="Winkler M.E."/>
        </authorList>
    </citation>
    <scope>NUCLEOTIDE SEQUENCE [GENOMIC DNA]</scope>
    <source>
        <strain>K12</strain>
    </source>
</reference>
<reference key="2">
    <citation type="journal article" date="1997" name="DNA Res.">
        <title>Construction of a contiguous 874-kb sequence of the Escherichia coli-K12 genome corresponding to 50.0-68.8 min on the linkage map and analysis of its sequence features.</title>
        <authorList>
            <person name="Yamamoto Y."/>
            <person name="Aiba H."/>
            <person name="Baba T."/>
            <person name="Hayashi K."/>
            <person name="Inada T."/>
            <person name="Isono K."/>
            <person name="Itoh T."/>
            <person name="Kimura S."/>
            <person name="Kitagawa M."/>
            <person name="Makino K."/>
            <person name="Miki T."/>
            <person name="Mitsuhashi N."/>
            <person name="Mizobuchi K."/>
            <person name="Mori H."/>
            <person name="Nakade S."/>
            <person name="Nakamura Y."/>
            <person name="Nashimoto H."/>
            <person name="Oshima T."/>
            <person name="Oyama S."/>
            <person name="Saito N."/>
            <person name="Sampei G."/>
            <person name="Satoh Y."/>
            <person name="Sivasundaram S."/>
            <person name="Tagami H."/>
            <person name="Takahashi H."/>
            <person name="Takeda J."/>
            <person name="Takemoto K."/>
            <person name="Uehara K."/>
            <person name="Wada C."/>
            <person name="Yamagata S."/>
            <person name="Horiuchi T."/>
        </authorList>
    </citation>
    <scope>NUCLEOTIDE SEQUENCE [LARGE SCALE GENOMIC DNA]</scope>
    <source>
        <strain>K12 / W3110 / ATCC 27325 / DSM 5911</strain>
    </source>
</reference>
<reference key="3">
    <citation type="journal article" date="1997" name="Science">
        <title>The complete genome sequence of Escherichia coli K-12.</title>
        <authorList>
            <person name="Blattner F.R."/>
            <person name="Plunkett G. III"/>
            <person name="Bloch C.A."/>
            <person name="Perna N.T."/>
            <person name="Burland V."/>
            <person name="Riley M."/>
            <person name="Collado-Vides J."/>
            <person name="Glasner J.D."/>
            <person name="Rode C.K."/>
            <person name="Mayhew G.F."/>
            <person name="Gregor J."/>
            <person name="Davis N.W."/>
            <person name="Kirkpatrick H.A."/>
            <person name="Goeden M.A."/>
            <person name="Rose D.J."/>
            <person name="Mau B."/>
            <person name="Shao Y."/>
        </authorList>
    </citation>
    <scope>NUCLEOTIDE SEQUENCE [LARGE SCALE GENOMIC DNA]</scope>
    <source>
        <strain>K12 / MG1655 / ATCC 47076</strain>
    </source>
</reference>
<reference key="4">
    <citation type="journal article" date="2006" name="Mol. Syst. Biol.">
        <title>Highly accurate genome sequences of Escherichia coli K-12 strains MG1655 and W3110.</title>
        <authorList>
            <person name="Hayashi K."/>
            <person name="Morooka N."/>
            <person name="Yamamoto Y."/>
            <person name="Fujita K."/>
            <person name="Isono K."/>
            <person name="Choi S."/>
            <person name="Ohtsubo E."/>
            <person name="Baba T."/>
            <person name="Wanner B.L."/>
            <person name="Mori H."/>
            <person name="Horiuchi T."/>
        </authorList>
    </citation>
    <scope>NUCLEOTIDE SEQUENCE [LARGE SCALE GENOMIC DNA]</scope>
    <source>
        <strain>K12 / W3110 / ATCC 27325 / DSM 5911</strain>
    </source>
</reference>
<reference key="5">
    <citation type="journal article" date="1987" name="J. Biol. Chem.">
        <title>The hisT-purF region of the Escherichia coli K-12 chromosome. Identification of additional genes of the hisT and purF operons.</title>
        <authorList>
            <person name="Nonet M.L."/>
            <person name="Marvel C.C."/>
            <person name="Tolan D.R."/>
        </authorList>
    </citation>
    <scope>NUCLEOTIDE SEQUENCE [GENOMIC DNA] OF 255-270</scope>
    <source>
        <strain>K12</strain>
    </source>
</reference>
<reference key="6">
    <citation type="journal article" date="1987" name="J. Bacteriol.">
        <title>Structural analysis of the Escherichia coli K-12 hisT operon by using a kanamycin resistance cassette.</title>
        <authorList>
            <person name="Arps P.J."/>
            <person name="Winkler M.E."/>
        </authorList>
    </citation>
    <scope>NUCLEOTIDE SEQUENCE [GENOMIC DNA] OF 1-10 AND 267-270</scope>
    <source>
        <strain>K12</strain>
    </source>
</reference>
<reference key="7">
    <citation type="journal article" date="1988" name="J. Biol. Chem.">
        <title>Purification, structure, and properties of Escherichia coli tRNA pseudouridine synthase I.</title>
        <authorList>
            <person name="Kammen H.O."/>
            <person name="Marvel C.C."/>
            <person name="Hardy L."/>
            <person name="Penhoet E.E."/>
        </authorList>
    </citation>
    <scope>PROTEIN SEQUENCE</scope>
    <scope>CHARACTERIZATION</scope>
</reference>
<reference key="8">
    <citation type="journal article" date="1998" name="Biochemistry">
        <title>A conserved aspartate of tRNA pseudouridine synthase is essential for activity and a probable nucleophilic catalyst.</title>
        <authorList>
            <person name="Huang L."/>
            <person name="Pookanjanatavip M."/>
            <person name="Gu X."/>
            <person name="Santi D.V."/>
        </authorList>
    </citation>
    <scope>ACTIVE SITE</scope>
</reference>
<reference key="9">
    <citation type="journal article" date="1999" name="Proc. Natl. Acad. Sci. U.S.A.">
        <title>The mechanism of pseudouridine synthase I as deduced from its interaction with 5-fluorouracil-tRNA.</title>
        <authorList>
            <person name="Gu X."/>
            <person name="Liu Y."/>
            <person name="Santi D.V."/>
        </authorList>
    </citation>
    <scope>ACTIVE SITE</scope>
</reference>
<reference key="10">
    <citation type="journal article" date="2000" name="Nat. Struct. Biol.">
        <title>The structural basis for tRNA recognition and pseudouridine formation by pseudouridine synthase I.</title>
        <authorList>
            <person name="Foster P.G."/>
            <person name="Huang L."/>
            <person name="Santi D.V."/>
            <person name="Stroud R.M."/>
        </authorList>
    </citation>
    <scope>X-RAY CRYSTALLOGRAPHY (1.5 ANGSTROMS) OF 7-270</scope>
    <scope>SUBUNIT</scope>
</reference>
<reference key="11">
    <citation type="journal article" date="2007" name="Mol. Cell">
        <title>How U38, 39, and 40 of many tRNAs become the targets for pseudouridylation by TruA.</title>
        <authorList>
            <person name="Hur S."/>
            <person name="Stroud R.M."/>
        </authorList>
    </citation>
    <scope>X-RAY CRYSTALLOGRAPHY (3.9 ANGSTROMS) OF 7-270 IN COMPLEX WITH TRNA</scope>
    <scope>CATALYTIC ACTIVITY</scope>
    <scope>FUNCTION</scope>
    <scope>SUBUNIT</scope>
    <scope>MUTAGENESIS OF ARG-58</scope>
</reference>
<feature type="chain" id="PRO_0000057375" description="tRNA pseudouridine synthase A">
    <location>
        <begin position="1"/>
        <end position="270"/>
    </location>
</feature>
<feature type="region of interest" description="RNA binding">
    <location>
        <begin position="107"/>
        <end position="111"/>
    </location>
</feature>
<feature type="region of interest" description="Interaction with tRNA" evidence="3">
    <location>
        <begin position="168"/>
        <end position="172"/>
    </location>
</feature>
<feature type="active site" description="Nucleophile" evidence="1 4">
    <location>
        <position position="60"/>
    </location>
</feature>
<feature type="binding site" evidence="3">
    <location>
        <position position="118"/>
    </location>
    <ligand>
        <name>substrate</name>
    </ligand>
</feature>
<feature type="site" description="Interaction with tRNA; Important for base-flipping" evidence="3">
    <location>
        <position position="58"/>
    </location>
</feature>
<feature type="site" description="Interaction with tRNA" evidence="3">
    <location>
        <position position="78"/>
    </location>
</feature>
<feature type="site" description="Interaction with tRNA" evidence="3">
    <location>
        <position position="110"/>
    </location>
</feature>
<feature type="site" description="Interaction with tRNA" evidence="3">
    <location>
        <position position="126"/>
    </location>
</feature>
<feature type="site" description="Interaction with tRNA" evidence="3">
    <location>
        <position position="139"/>
    </location>
</feature>
<feature type="mutagenesis site" description="Loss of activity." evidence="3">
    <original>R</original>
    <variation>A</variation>
    <location>
        <position position="58"/>
    </location>
</feature>
<feature type="strand" evidence="6">
    <location>
        <begin position="10"/>
        <end position="18"/>
    </location>
</feature>
<feature type="helix" evidence="7">
    <location>
        <begin position="20"/>
        <end position="22"/>
    </location>
</feature>
<feature type="strand" evidence="7">
    <location>
        <begin position="30"/>
        <end position="32"/>
    </location>
</feature>
<feature type="helix" evidence="6">
    <location>
        <begin position="35"/>
        <end position="47"/>
    </location>
</feature>
<feature type="strand" evidence="6">
    <location>
        <begin position="53"/>
        <end position="57"/>
    </location>
</feature>
<feature type="strand" evidence="6">
    <location>
        <begin position="64"/>
        <end position="75"/>
    </location>
</feature>
<feature type="helix" evidence="6">
    <location>
        <begin position="80"/>
        <end position="89"/>
    </location>
</feature>
<feature type="strand" evidence="6">
    <location>
        <begin position="95"/>
        <end position="102"/>
    </location>
</feature>
<feature type="turn" evidence="6">
    <location>
        <begin position="109"/>
        <end position="112"/>
    </location>
</feature>
<feature type="strand" evidence="6">
    <location>
        <begin position="115"/>
        <end position="123"/>
    </location>
</feature>
<feature type="strand" evidence="6">
    <location>
        <begin position="125"/>
        <end position="127"/>
    </location>
</feature>
<feature type="turn" evidence="6">
    <location>
        <begin position="131"/>
        <end position="134"/>
    </location>
</feature>
<feature type="strand" evidence="6">
    <location>
        <begin position="135"/>
        <end position="138"/>
    </location>
</feature>
<feature type="helix" evidence="6">
    <location>
        <begin position="145"/>
        <end position="152"/>
    </location>
</feature>
<feature type="helix" evidence="6">
    <location>
        <begin position="153"/>
        <end position="155"/>
    </location>
</feature>
<feature type="strand" evidence="6">
    <location>
        <begin position="157"/>
        <end position="160"/>
    </location>
</feature>
<feature type="helix" evidence="6">
    <location>
        <begin position="162"/>
        <end position="164"/>
    </location>
</feature>
<feature type="strand" evidence="6">
    <location>
        <begin position="175"/>
        <end position="186"/>
    </location>
</feature>
<feature type="strand" evidence="6">
    <location>
        <begin position="189"/>
        <end position="197"/>
    </location>
</feature>
<feature type="helix" evidence="6">
    <location>
        <begin position="203"/>
        <end position="215"/>
    </location>
</feature>
<feature type="helix" evidence="6">
    <location>
        <begin position="223"/>
        <end position="230"/>
    </location>
</feature>
<feature type="helix" evidence="6">
    <location>
        <begin position="233"/>
        <end position="235"/>
    </location>
</feature>
<feature type="strand" evidence="6">
    <location>
        <begin position="245"/>
        <end position="251"/>
    </location>
</feature>
<feature type="helix" evidence="6">
    <location>
        <begin position="254"/>
        <end position="256"/>
    </location>
</feature>
<organism>
    <name type="scientific">Escherichia coli (strain K12)</name>
    <dbReference type="NCBI Taxonomy" id="83333"/>
    <lineage>
        <taxon>Bacteria</taxon>
        <taxon>Pseudomonadati</taxon>
        <taxon>Pseudomonadota</taxon>
        <taxon>Gammaproteobacteria</taxon>
        <taxon>Enterobacterales</taxon>
        <taxon>Enterobacteriaceae</taxon>
        <taxon>Escherichia</taxon>
    </lineage>
</organism>
<accession>P07649</accession>
<comment type="function">
    <text evidence="3">Formation of pseudouridine at positions 38, 39 and 40 in the anticodon stem and loop of transfer RNAs.</text>
</comment>
<comment type="catalytic activity">
    <reaction evidence="3">
        <text>uridine(38/39/40) in tRNA = pseudouridine(38/39/40) in tRNA</text>
        <dbReference type="Rhea" id="RHEA:22376"/>
        <dbReference type="Rhea" id="RHEA-COMP:10085"/>
        <dbReference type="Rhea" id="RHEA-COMP:10087"/>
        <dbReference type="ChEBI" id="CHEBI:65314"/>
        <dbReference type="ChEBI" id="CHEBI:65315"/>
        <dbReference type="EC" id="5.4.99.12"/>
    </reaction>
</comment>
<comment type="subunit">
    <text evidence="2 3">Homodimer.</text>
</comment>
<comment type="similarity">
    <text evidence="5">Belongs to the tRNA pseudouridine synthase TruA family.</text>
</comment>
<sequence>MSDQQQPPVYKIALGIEYDGSKYYGWQRQNEVRSVQEKLEKALSQVANEPITVFCAGRTDAGVHGTGQVVHFETTALRKDAAWTLGVNANLPGDIAVRWVKTVPDDFHARFSATARRYRYIIYNHRLRPAVLSKGVTHFYEPLDAERMHRAAQCLLGENDFTSFRAVQCQSRTPWRNVMHINVTRHGPYVVVDIKANAFVHHMVRNIVGSLMEVGAHNQPESWIAELLAAKDRTLAAATAKAEGLYLVAVDYPDRYDLPKPPMGPLFLAD</sequence>
<protein>
    <recommendedName>
        <fullName>tRNA pseudouridine synthase A</fullName>
        <ecNumber>5.4.99.12</ecNumber>
    </recommendedName>
    <alternativeName>
        <fullName>tRNA pseudouridine(38-40) synthase</fullName>
    </alternativeName>
    <alternativeName>
        <fullName>tRNA pseudouridylate synthase I</fullName>
        <shortName>PSU-I</shortName>
    </alternativeName>
    <alternativeName>
        <fullName>tRNA-uridine isomerase I</fullName>
    </alternativeName>
</protein>
<dbReference type="EC" id="5.4.99.12"/>
<dbReference type="EMBL" id="X02743">
    <property type="protein sequence ID" value="CAA26522.1"/>
    <property type="molecule type" value="Genomic_DNA"/>
</dbReference>
<dbReference type="EMBL" id="U00096">
    <property type="protein sequence ID" value="AAC75378.1"/>
    <property type="molecule type" value="Genomic_DNA"/>
</dbReference>
<dbReference type="EMBL" id="AP009048">
    <property type="protein sequence ID" value="BAA16175.1"/>
    <property type="molecule type" value="Genomic_DNA"/>
</dbReference>
<dbReference type="EMBL" id="AH000881">
    <property type="protein sequence ID" value="AAA23963.1"/>
    <property type="molecule type" value="Genomic_DNA"/>
</dbReference>
<dbReference type="EMBL" id="AH000888">
    <property type="protein sequence ID" value="AAA24313.1"/>
    <property type="molecule type" value="Genomic_DNA"/>
</dbReference>
<dbReference type="EMBL" id="M15543">
    <property type="status" value="NOT_ANNOTATED_CDS"/>
    <property type="molecule type" value="Genomic_DNA"/>
</dbReference>
<dbReference type="PIR" id="B23792">
    <property type="entry name" value="SYECZ1"/>
</dbReference>
<dbReference type="RefSeq" id="NP_416821.1">
    <property type="nucleotide sequence ID" value="NC_000913.3"/>
</dbReference>
<dbReference type="RefSeq" id="WP_001283586.1">
    <property type="nucleotide sequence ID" value="NZ_LN832404.1"/>
</dbReference>
<dbReference type="PDB" id="1DJ0">
    <property type="method" value="X-ray"/>
    <property type="resolution" value="1.50 A"/>
    <property type="chains" value="A/B=7-270"/>
</dbReference>
<dbReference type="PDB" id="2NQP">
    <property type="method" value="X-ray"/>
    <property type="resolution" value="3.50 A"/>
    <property type="chains" value="A/B/C/D=1-270"/>
</dbReference>
<dbReference type="PDB" id="2NR0">
    <property type="method" value="X-ray"/>
    <property type="resolution" value="3.90 A"/>
    <property type="chains" value="A/B/C/D=1-270"/>
</dbReference>
<dbReference type="PDB" id="2NRE">
    <property type="method" value="X-ray"/>
    <property type="resolution" value="4.00 A"/>
    <property type="chains" value="A=1-270"/>
</dbReference>
<dbReference type="PDBsum" id="1DJ0"/>
<dbReference type="PDBsum" id="2NQP"/>
<dbReference type="PDBsum" id="2NR0"/>
<dbReference type="PDBsum" id="2NRE"/>
<dbReference type="SMR" id="P07649"/>
<dbReference type="BioGRID" id="4261359">
    <property type="interactions" value="67"/>
</dbReference>
<dbReference type="BioGRID" id="851134">
    <property type="interactions" value="4"/>
</dbReference>
<dbReference type="DIP" id="DIP-11043N"/>
<dbReference type="FunCoup" id="P07649">
    <property type="interactions" value="677"/>
</dbReference>
<dbReference type="IntAct" id="P07649">
    <property type="interactions" value="9"/>
</dbReference>
<dbReference type="STRING" id="511145.b2318"/>
<dbReference type="jPOST" id="P07649"/>
<dbReference type="PaxDb" id="511145-b2318"/>
<dbReference type="EnsemblBacteria" id="AAC75378">
    <property type="protein sequence ID" value="AAC75378"/>
    <property type="gene ID" value="b2318"/>
</dbReference>
<dbReference type="GeneID" id="946793"/>
<dbReference type="KEGG" id="ecj:JW2315"/>
<dbReference type="KEGG" id="eco:b2318"/>
<dbReference type="KEGG" id="ecoc:C3026_12920"/>
<dbReference type="PATRIC" id="fig|1411691.4.peg.4416"/>
<dbReference type="EchoBASE" id="EB0449"/>
<dbReference type="eggNOG" id="COG0101">
    <property type="taxonomic scope" value="Bacteria"/>
</dbReference>
<dbReference type="HOGENOM" id="CLU_014673_0_2_6"/>
<dbReference type="InParanoid" id="P07649"/>
<dbReference type="OMA" id="ADAFCHN"/>
<dbReference type="OrthoDB" id="9811823at2"/>
<dbReference type="PhylomeDB" id="P07649"/>
<dbReference type="BioCyc" id="EcoCyc:EG10454-MONOMER"/>
<dbReference type="BioCyc" id="MetaCyc:EG10454-MONOMER"/>
<dbReference type="EvolutionaryTrace" id="P07649"/>
<dbReference type="PRO" id="PR:P07649"/>
<dbReference type="Proteomes" id="UP000000625">
    <property type="component" value="Chromosome"/>
</dbReference>
<dbReference type="GO" id="GO:0042803">
    <property type="term" value="F:protein homodimerization activity"/>
    <property type="evidence" value="ECO:0000314"/>
    <property type="project" value="EcoCyc"/>
</dbReference>
<dbReference type="GO" id="GO:0009982">
    <property type="term" value="F:pseudouridine synthase activity"/>
    <property type="evidence" value="ECO:0000318"/>
    <property type="project" value="GO_Central"/>
</dbReference>
<dbReference type="GO" id="GO:0000049">
    <property type="term" value="F:tRNA binding"/>
    <property type="evidence" value="ECO:0000314"/>
    <property type="project" value="EcoCyc"/>
</dbReference>
<dbReference type="GO" id="GO:0106029">
    <property type="term" value="F:tRNA pseudouridine synthase activity"/>
    <property type="evidence" value="ECO:0000314"/>
    <property type="project" value="EcoCyc"/>
</dbReference>
<dbReference type="GO" id="GO:0160147">
    <property type="term" value="F:tRNA pseudouridine(38-40) synthase activity"/>
    <property type="evidence" value="ECO:0007669"/>
    <property type="project" value="UniProtKB-EC"/>
</dbReference>
<dbReference type="GO" id="GO:0031119">
    <property type="term" value="P:tRNA pseudouridine synthesis"/>
    <property type="evidence" value="ECO:0000315"/>
    <property type="project" value="EcoCyc"/>
</dbReference>
<dbReference type="CDD" id="cd02570">
    <property type="entry name" value="PseudoU_synth_EcTruA"/>
    <property type="match status" value="1"/>
</dbReference>
<dbReference type="FunFam" id="3.30.70.580:FF:000001">
    <property type="entry name" value="tRNA pseudouridine synthase A"/>
    <property type="match status" value="1"/>
</dbReference>
<dbReference type="FunFam" id="3.30.70.660:FF:000001">
    <property type="entry name" value="tRNA pseudouridine synthase A"/>
    <property type="match status" value="1"/>
</dbReference>
<dbReference type="Gene3D" id="3.30.70.660">
    <property type="entry name" value="Pseudouridine synthase I, catalytic domain, C-terminal subdomain"/>
    <property type="match status" value="1"/>
</dbReference>
<dbReference type="Gene3D" id="3.30.70.580">
    <property type="entry name" value="Pseudouridine synthase I, catalytic domain, N-terminal subdomain"/>
    <property type="match status" value="1"/>
</dbReference>
<dbReference type="HAMAP" id="MF_00171">
    <property type="entry name" value="TruA"/>
    <property type="match status" value="1"/>
</dbReference>
<dbReference type="InterPro" id="IPR020103">
    <property type="entry name" value="PsdUridine_synth_cat_dom_sf"/>
</dbReference>
<dbReference type="InterPro" id="IPR001406">
    <property type="entry name" value="PsdUridine_synth_TruA"/>
</dbReference>
<dbReference type="InterPro" id="IPR020097">
    <property type="entry name" value="PsdUridine_synth_TruA_a/b_dom"/>
</dbReference>
<dbReference type="InterPro" id="IPR020095">
    <property type="entry name" value="PsdUridine_synth_TruA_C"/>
</dbReference>
<dbReference type="InterPro" id="IPR020094">
    <property type="entry name" value="TruA/RsuA/RluB/E/F_N"/>
</dbReference>
<dbReference type="NCBIfam" id="TIGR00071">
    <property type="entry name" value="hisT_truA"/>
    <property type="match status" value="1"/>
</dbReference>
<dbReference type="PANTHER" id="PTHR11142">
    <property type="entry name" value="PSEUDOURIDYLATE SYNTHASE"/>
    <property type="match status" value="1"/>
</dbReference>
<dbReference type="PANTHER" id="PTHR11142:SF0">
    <property type="entry name" value="TRNA PSEUDOURIDINE SYNTHASE-LIKE 1"/>
    <property type="match status" value="1"/>
</dbReference>
<dbReference type="Pfam" id="PF01416">
    <property type="entry name" value="PseudoU_synth_1"/>
    <property type="match status" value="2"/>
</dbReference>
<dbReference type="PIRSF" id="PIRSF001430">
    <property type="entry name" value="tRNA_psdUrid_synth"/>
    <property type="match status" value="1"/>
</dbReference>
<dbReference type="SUPFAM" id="SSF55120">
    <property type="entry name" value="Pseudouridine synthase"/>
    <property type="match status" value="1"/>
</dbReference>
<keyword id="KW-0002">3D-structure</keyword>
<keyword id="KW-0903">Direct protein sequencing</keyword>
<keyword id="KW-0413">Isomerase</keyword>
<keyword id="KW-1185">Reference proteome</keyword>
<keyword id="KW-0819">tRNA processing</keyword>
<gene>
    <name type="primary">truA</name>
    <name type="synonym">asuC</name>
    <name type="synonym">hisT</name>
    <name type="synonym">leuK</name>
    <name type="ordered locus">b2318</name>
    <name type="ordered locus">JW2315</name>
</gene>
<proteinExistence type="evidence at protein level"/>
<evidence type="ECO:0000269" key="1">
    <source>
    </source>
</evidence>
<evidence type="ECO:0000269" key="2">
    <source>
    </source>
</evidence>
<evidence type="ECO:0000269" key="3">
    <source>
    </source>
</evidence>
<evidence type="ECO:0000269" key="4">
    <source>
    </source>
</evidence>
<evidence type="ECO:0000305" key="5"/>
<evidence type="ECO:0007829" key="6">
    <source>
        <dbReference type="PDB" id="1DJ0"/>
    </source>
</evidence>
<evidence type="ECO:0007829" key="7">
    <source>
        <dbReference type="PDB" id="2NQP"/>
    </source>
</evidence>